<keyword id="KW-0963">Cytoplasm</keyword>
<keyword id="KW-0256">Endoplasmic reticulum</keyword>
<keyword id="KW-0551">Lipid droplet</keyword>
<keyword id="KW-0472">Membrane</keyword>
<keyword id="KW-0489">Methyltransferase</keyword>
<keyword id="KW-0492">Microsome</keyword>
<keyword id="KW-1185">Reference proteome</keyword>
<keyword id="KW-0732">Signal</keyword>
<keyword id="KW-0808">Transferase</keyword>
<organism>
    <name type="scientific">Mus musculus</name>
    <name type="common">Mouse</name>
    <dbReference type="NCBI Taxonomy" id="10090"/>
    <lineage>
        <taxon>Eukaryota</taxon>
        <taxon>Metazoa</taxon>
        <taxon>Chordata</taxon>
        <taxon>Craniata</taxon>
        <taxon>Vertebrata</taxon>
        <taxon>Euteleostomi</taxon>
        <taxon>Mammalia</taxon>
        <taxon>Eutheria</taxon>
        <taxon>Euarchontoglires</taxon>
        <taxon>Glires</taxon>
        <taxon>Rodentia</taxon>
        <taxon>Myomorpha</taxon>
        <taxon>Muroidea</taxon>
        <taxon>Muridae</taxon>
        <taxon>Murinae</taxon>
        <taxon>Mus</taxon>
        <taxon>Mus</taxon>
    </lineage>
</organism>
<protein>
    <recommendedName>
        <fullName>Thiol S-methyltransferase TMT1B</fullName>
        <ecNumber evidence="2">2.1.1.9</ecNumber>
    </recommendedName>
    <alternativeName>
        <fullName>Methyltransferase-like protein 7B</fullName>
    </alternativeName>
    <alternativeName>
        <fullName>Thiol S-methyltransferase METTL7B</fullName>
    </alternativeName>
</protein>
<feature type="signal peptide" evidence="3">
    <location>
        <begin position="1"/>
        <end position="23"/>
    </location>
</feature>
<feature type="chain" id="PRO_0000251923" description="Thiol S-methyltransferase TMT1B">
    <location>
        <begin position="24"/>
        <end position="244"/>
    </location>
</feature>
<accession>Q9DD20</accession>
<accession>Q78ID2</accession>
<dbReference type="EC" id="2.1.1.9" evidence="2"/>
<dbReference type="EMBL" id="AK002239">
    <property type="protein sequence ID" value="BAB21956.2"/>
    <property type="molecule type" value="mRNA"/>
</dbReference>
<dbReference type="EMBL" id="BC024898">
    <property type="protein sequence ID" value="AAH24898.1"/>
    <property type="status" value="ALT_INIT"/>
    <property type="molecule type" value="mRNA"/>
</dbReference>
<dbReference type="CCDS" id="CCDS24301.1"/>
<dbReference type="RefSeq" id="NP_082129.2">
    <property type="nucleotide sequence ID" value="NM_027853.2"/>
</dbReference>
<dbReference type="SMR" id="Q9DD20"/>
<dbReference type="BioGRID" id="214841">
    <property type="interactions" value="1"/>
</dbReference>
<dbReference type="FunCoup" id="Q9DD20">
    <property type="interactions" value="24"/>
</dbReference>
<dbReference type="IntAct" id="Q9DD20">
    <property type="interactions" value="1"/>
</dbReference>
<dbReference type="STRING" id="10090.ENSMUSP00000026398"/>
<dbReference type="GlyGen" id="Q9DD20">
    <property type="glycosylation" value="1 site, 1 O-linked glycan (1 site)"/>
</dbReference>
<dbReference type="iPTMnet" id="Q9DD20"/>
<dbReference type="PhosphoSitePlus" id="Q9DD20"/>
<dbReference type="SwissPalm" id="Q9DD20"/>
<dbReference type="jPOST" id="Q9DD20"/>
<dbReference type="PaxDb" id="10090-ENSMUSP00000026398"/>
<dbReference type="PeptideAtlas" id="Q9DD20"/>
<dbReference type="ProteomicsDB" id="295544"/>
<dbReference type="Antibodypedia" id="27618">
    <property type="antibodies" value="188 antibodies from 30 providers"/>
</dbReference>
<dbReference type="DNASU" id="71664"/>
<dbReference type="Ensembl" id="ENSMUST00000026398.5">
    <property type="protein sequence ID" value="ENSMUSP00000026398.4"/>
    <property type="gene ID" value="ENSMUSG00000025347.5"/>
</dbReference>
<dbReference type="GeneID" id="71664"/>
<dbReference type="KEGG" id="mmu:71664"/>
<dbReference type="UCSC" id="uc007hpd.1">
    <property type="organism name" value="mouse"/>
</dbReference>
<dbReference type="AGR" id="MGI:1918914"/>
<dbReference type="CTD" id="196410"/>
<dbReference type="MGI" id="MGI:1918914">
    <property type="gene designation" value="Tmt1b"/>
</dbReference>
<dbReference type="VEuPathDB" id="HostDB:ENSMUSG00000025347"/>
<dbReference type="eggNOG" id="KOG4300">
    <property type="taxonomic scope" value="Eukaryota"/>
</dbReference>
<dbReference type="GeneTree" id="ENSGT00940000162340"/>
<dbReference type="HOGENOM" id="CLU_037990_7_2_1"/>
<dbReference type="InParanoid" id="Q9DD20"/>
<dbReference type="OMA" id="PPPIKWL"/>
<dbReference type="OrthoDB" id="416496at2759"/>
<dbReference type="PhylomeDB" id="Q9DD20"/>
<dbReference type="TreeFam" id="TF331790"/>
<dbReference type="BioGRID-ORCS" id="71664">
    <property type="hits" value="2 hits in 80 CRISPR screens"/>
</dbReference>
<dbReference type="PRO" id="PR:Q9DD20"/>
<dbReference type="Proteomes" id="UP000000589">
    <property type="component" value="Chromosome 10"/>
</dbReference>
<dbReference type="RNAct" id="Q9DD20">
    <property type="molecule type" value="protein"/>
</dbReference>
<dbReference type="Bgee" id="ENSMUSG00000025347">
    <property type="expression patterns" value="Expressed in left lobe of liver and 57 other cell types or tissues"/>
</dbReference>
<dbReference type="GO" id="GO:0005829">
    <property type="term" value="C:cytosol"/>
    <property type="evidence" value="ECO:0007669"/>
    <property type="project" value="UniProtKB-SubCell"/>
</dbReference>
<dbReference type="GO" id="GO:0005789">
    <property type="term" value="C:endoplasmic reticulum membrane"/>
    <property type="evidence" value="ECO:0007669"/>
    <property type="project" value="UniProtKB-SubCell"/>
</dbReference>
<dbReference type="GO" id="GO:0005811">
    <property type="term" value="C:lipid droplet"/>
    <property type="evidence" value="ECO:0007669"/>
    <property type="project" value="UniProtKB-SubCell"/>
</dbReference>
<dbReference type="GO" id="GO:0008757">
    <property type="term" value="F:S-adenosylmethionine-dependent methyltransferase activity"/>
    <property type="evidence" value="ECO:0000250"/>
    <property type="project" value="UniProtKB"/>
</dbReference>
<dbReference type="GO" id="GO:0018708">
    <property type="term" value="F:thiol S-methyltransferase activity"/>
    <property type="evidence" value="ECO:0000250"/>
    <property type="project" value="UniProtKB"/>
</dbReference>
<dbReference type="GO" id="GO:0032259">
    <property type="term" value="P:methylation"/>
    <property type="evidence" value="ECO:0007669"/>
    <property type="project" value="UniProtKB-KW"/>
</dbReference>
<dbReference type="CDD" id="cd02440">
    <property type="entry name" value="AdoMet_MTases"/>
    <property type="match status" value="1"/>
</dbReference>
<dbReference type="Gene3D" id="3.40.50.150">
    <property type="entry name" value="Vaccinia Virus protein VP39"/>
    <property type="match status" value="1"/>
</dbReference>
<dbReference type="InterPro" id="IPR013216">
    <property type="entry name" value="Methyltransf_11"/>
</dbReference>
<dbReference type="InterPro" id="IPR029063">
    <property type="entry name" value="SAM-dependent_MTases_sf"/>
</dbReference>
<dbReference type="InterPro" id="IPR052356">
    <property type="entry name" value="Thiol_S-MT"/>
</dbReference>
<dbReference type="PANTHER" id="PTHR45036">
    <property type="entry name" value="METHYLTRANSFERASE LIKE 7B"/>
    <property type="match status" value="1"/>
</dbReference>
<dbReference type="PANTHER" id="PTHR45036:SF6">
    <property type="entry name" value="THIOL S-METHYLTRANSFERASE TMT1B"/>
    <property type="match status" value="1"/>
</dbReference>
<dbReference type="Pfam" id="PF08241">
    <property type="entry name" value="Methyltransf_11"/>
    <property type="match status" value="1"/>
</dbReference>
<dbReference type="SUPFAM" id="SSF53335">
    <property type="entry name" value="S-adenosyl-L-methionine-dependent methyltransferases"/>
    <property type="match status" value="1"/>
</dbReference>
<gene>
    <name evidence="5" type="primary">Tmt1b</name>
    <name type="synonym">Mettl7b</name>
</gene>
<name>TMT1B_MOUSE</name>
<evidence type="ECO:0000250" key="1">
    <source>
        <dbReference type="UniProtKB" id="Q562C4"/>
    </source>
</evidence>
<evidence type="ECO:0000250" key="2">
    <source>
        <dbReference type="UniProtKB" id="Q6UX53"/>
    </source>
</evidence>
<evidence type="ECO:0000255" key="3"/>
<evidence type="ECO:0000305" key="4"/>
<evidence type="ECO:0000312" key="5">
    <source>
        <dbReference type="MGI" id="MGI:1918914"/>
    </source>
</evidence>
<reference key="1">
    <citation type="journal article" date="2005" name="Science">
        <title>The transcriptional landscape of the mammalian genome.</title>
        <authorList>
            <person name="Carninci P."/>
            <person name="Kasukawa T."/>
            <person name="Katayama S."/>
            <person name="Gough J."/>
            <person name="Frith M.C."/>
            <person name="Maeda N."/>
            <person name="Oyama R."/>
            <person name="Ravasi T."/>
            <person name="Lenhard B."/>
            <person name="Wells C."/>
            <person name="Kodzius R."/>
            <person name="Shimokawa K."/>
            <person name="Bajic V.B."/>
            <person name="Brenner S.E."/>
            <person name="Batalov S."/>
            <person name="Forrest A.R."/>
            <person name="Zavolan M."/>
            <person name="Davis M.J."/>
            <person name="Wilming L.G."/>
            <person name="Aidinis V."/>
            <person name="Allen J.E."/>
            <person name="Ambesi-Impiombato A."/>
            <person name="Apweiler R."/>
            <person name="Aturaliya R.N."/>
            <person name="Bailey T.L."/>
            <person name="Bansal M."/>
            <person name="Baxter L."/>
            <person name="Beisel K.W."/>
            <person name="Bersano T."/>
            <person name="Bono H."/>
            <person name="Chalk A.M."/>
            <person name="Chiu K.P."/>
            <person name="Choudhary V."/>
            <person name="Christoffels A."/>
            <person name="Clutterbuck D.R."/>
            <person name="Crowe M.L."/>
            <person name="Dalla E."/>
            <person name="Dalrymple B.P."/>
            <person name="de Bono B."/>
            <person name="Della Gatta G."/>
            <person name="di Bernardo D."/>
            <person name="Down T."/>
            <person name="Engstrom P."/>
            <person name="Fagiolini M."/>
            <person name="Faulkner G."/>
            <person name="Fletcher C.F."/>
            <person name="Fukushima T."/>
            <person name="Furuno M."/>
            <person name="Futaki S."/>
            <person name="Gariboldi M."/>
            <person name="Georgii-Hemming P."/>
            <person name="Gingeras T.R."/>
            <person name="Gojobori T."/>
            <person name="Green R.E."/>
            <person name="Gustincich S."/>
            <person name="Harbers M."/>
            <person name="Hayashi Y."/>
            <person name="Hensch T.K."/>
            <person name="Hirokawa N."/>
            <person name="Hill D."/>
            <person name="Huminiecki L."/>
            <person name="Iacono M."/>
            <person name="Ikeo K."/>
            <person name="Iwama A."/>
            <person name="Ishikawa T."/>
            <person name="Jakt M."/>
            <person name="Kanapin A."/>
            <person name="Katoh M."/>
            <person name="Kawasawa Y."/>
            <person name="Kelso J."/>
            <person name="Kitamura H."/>
            <person name="Kitano H."/>
            <person name="Kollias G."/>
            <person name="Krishnan S.P."/>
            <person name="Kruger A."/>
            <person name="Kummerfeld S.K."/>
            <person name="Kurochkin I.V."/>
            <person name="Lareau L.F."/>
            <person name="Lazarevic D."/>
            <person name="Lipovich L."/>
            <person name="Liu J."/>
            <person name="Liuni S."/>
            <person name="McWilliam S."/>
            <person name="Madan Babu M."/>
            <person name="Madera M."/>
            <person name="Marchionni L."/>
            <person name="Matsuda H."/>
            <person name="Matsuzawa S."/>
            <person name="Miki H."/>
            <person name="Mignone F."/>
            <person name="Miyake S."/>
            <person name="Morris K."/>
            <person name="Mottagui-Tabar S."/>
            <person name="Mulder N."/>
            <person name="Nakano N."/>
            <person name="Nakauchi H."/>
            <person name="Ng P."/>
            <person name="Nilsson R."/>
            <person name="Nishiguchi S."/>
            <person name="Nishikawa S."/>
            <person name="Nori F."/>
            <person name="Ohara O."/>
            <person name="Okazaki Y."/>
            <person name="Orlando V."/>
            <person name="Pang K.C."/>
            <person name="Pavan W.J."/>
            <person name="Pavesi G."/>
            <person name="Pesole G."/>
            <person name="Petrovsky N."/>
            <person name="Piazza S."/>
            <person name="Reed J."/>
            <person name="Reid J.F."/>
            <person name="Ring B.Z."/>
            <person name="Ringwald M."/>
            <person name="Rost B."/>
            <person name="Ruan Y."/>
            <person name="Salzberg S.L."/>
            <person name="Sandelin A."/>
            <person name="Schneider C."/>
            <person name="Schoenbach C."/>
            <person name="Sekiguchi K."/>
            <person name="Semple C.A."/>
            <person name="Seno S."/>
            <person name="Sessa L."/>
            <person name="Sheng Y."/>
            <person name="Shibata Y."/>
            <person name="Shimada H."/>
            <person name="Shimada K."/>
            <person name="Silva D."/>
            <person name="Sinclair B."/>
            <person name="Sperling S."/>
            <person name="Stupka E."/>
            <person name="Sugiura K."/>
            <person name="Sultana R."/>
            <person name="Takenaka Y."/>
            <person name="Taki K."/>
            <person name="Tammoja K."/>
            <person name="Tan S.L."/>
            <person name="Tang S."/>
            <person name="Taylor M.S."/>
            <person name="Tegner J."/>
            <person name="Teichmann S.A."/>
            <person name="Ueda H.R."/>
            <person name="van Nimwegen E."/>
            <person name="Verardo R."/>
            <person name="Wei C.L."/>
            <person name="Yagi K."/>
            <person name="Yamanishi H."/>
            <person name="Zabarovsky E."/>
            <person name="Zhu S."/>
            <person name="Zimmer A."/>
            <person name="Hide W."/>
            <person name="Bult C."/>
            <person name="Grimmond S.M."/>
            <person name="Teasdale R.D."/>
            <person name="Liu E.T."/>
            <person name="Brusic V."/>
            <person name="Quackenbush J."/>
            <person name="Wahlestedt C."/>
            <person name="Mattick J.S."/>
            <person name="Hume D.A."/>
            <person name="Kai C."/>
            <person name="Sasaki D."/>
            <person name="Tomaru Y."/>
            <person name="Fukuda S."/>
            <person name="Kanamori-Katayama M."/>
            <person name="Suzuki M."/>
            <person name="Aoki J."/>
            <person name="Arakawa T."/>
            <person name="Iida J."/>
            <person name="Imamura K."/>
            <person name="Itoh M."/>
            <person name="Kato T."/>
            <person name="Kawaji H."/>
            <person name="Kawagashira N."/>
            <person name="Kawashima T."/>
            <person name="Kojima M."/>
            <person name="Kondo S."/>
            <person name="Konno H."/>
            <person name="Nakano K."/>
            <person name="Ninomiya N."/>
            <person name="Nishio T."/>
            <person name="Okada M."/>
            <person name="Plessy C."/>
            <person name="Shibata K."/>
            <person name="Shiraki T."/>
            <person name="Suzuki S."/>
            <person name="Tagami M."/>
            <person name="Waki K."/>
            <person name="Watahiki A."/>
            <person name="Okamura-Oho Y."/>
            <person name="Suzuki H."/>
            <person name="Kawai J."/>
            <person name="Hayashizaki Y."/>
        </authorList>
    </citation>
    <scope>NUCLEOTIDE SEQUENCE [LARGE SCALE MRNA]</scope>
    <source>
        <strain>C57BL/6J</strain>
        <tissue>Kidney</tissue>
    </source>
</reference>
<reference key="2">
    <citation type="journal article" date="2004" name="Genome Res.">
        <title>The status, quality, and expansion of the NIH full-length cDNA project: the Mammalian Gene Collection (MGC).</title>
        <authorList>
            <consortium name="The MGC Project Team"/>
        </authorList>
    </citation>
    <scope>NUCLEOTIDE SEQUENCE [LARGE SCALE MRNA] OF 23-244</scope>
    <source>
        <strain>FVB/N</strain>
        <tissue>Colon</tissue>
    </source>
</reference>
<reference key="3">
    <citation type="journal article" date="2010" name="Cell">
        <title>A tissue-specific atlas of mouse protein phosphorylation and expression.</title>
        <authorList>
            <person name="Huttlin E.L."/>
            <person name="Jedrychowski M.P."/>
            <person name="Elias J.E."/>
            <person name="Goswami T."/>
            <person name="Rad R."/>
            <person name="Beausoleil S.A."/>
            <person name="Villen J."/>
            <person name="Haas W."/>
            <person name="Sowa M.E."/>
            <person name="Gygi S.P."/>
        </authorList>
    </citation>
    <scope>IDENTIFICATION BY MASS SPECTROMETRY [LARGE SCALE ANALYSIS]</scope>
    <source>
        <tissue>Kidney</tissue>
        <tissue>Liver</tissue>
    </source>
</reference>
<comment type="function">
    <text evidence="2">Thiol S-methyltransferase that catalyzes the transfer of a methyl group from S-adenosyl-L-methionine to alkyl and phenolic thiol-containing acceptor substrates. Together with TMT1B accounts for most of S-thiol methylation activity in the endoplasmic reticulum of hepatocytes. Selectively methylates S-centered nucleophiles from metabolites such as hydrogen sulfide and dithiothreitol.</text>
</comment>
<comment type="catalytic activity">
    <reaction evidence="2">
        <text>a thiol + S-adenosyl-L-methionine = a methyl thioether + S-adenosyl-L-homocysteine + H(+)</text>
        <dbReference type="Rhea" id="RHEA:18277"/>
        <dbReference type="ChEBI" id="CHEBI:15378"/>
        <dbReference type="ChEBI" id="CHEBI:29256"/>
        <dbReference type="ChEBI" id="CHEBI:57856"/>
        <dbReference type="ChEBI" id="CHEBI:59789"/>
        <dbReference type="ChEBI" id="CHEBI:86315"/>
        <dbReference type="EC" id="2.1.1.9"/>
    </reaction>
    <physiologicalReaction direction="left-to-right" evidence="2">
        <dbReference type="Rhea" id="RHEA:18278"/>
    </physiologicalReaction>
</comment>
<comment type="subcellular location">
    <subcellularLocation>
        <location evidence="1">Endoplasmic reticulum membrane</location>
        <topology evidence="1">Peripheral membrane protein</topology>
    </subcellularLocation>
    <subcellularLocation>
        <location evidence="1">Lipid droplet</location>
    </subcellularLocation>
    <subcellularLocation>
        <location evidence="2">Microsome</location>
    </subcellularLocation>
    <subcellularLocation>
        <location evidence="2">Cytoplasm</location>
        <location evidence="2">Cytosol</location>
    </subcellularLocation>
    <text evidence="1">Highly concentrated in the perinuclear area of the endoplasmic reticulum (ER) and surrounding lipid droplets. May be associated with the specific regions of the LR that form lipid droplets and targeted to the initial deposits of lipids where the lipid droplets form.</text>
</comment>
<comment type="similarity">
    <text evidence="4">Belongs to the methyltransferase superfamily.</text>
</comment>
<comment type="sequence caution" evidence="4">
    <conflict type="erroneous initiation">
        <sequence resource="EMBL-CDS" id="AAH24898"/>
    </conflict>
</comment>
<proteinExistence type="evidence at protein level"/>
<sequence length="244" mass="28049">MDALVLFLQLLVLLLTLPLHLLALLGCWQPICKTYFPYFMAMLTARSYKKMESKKRELFSQIKDLKGTSGNVALLELGCGTGANFQFYPQGCKVTCVDPNPNFEKFLTKSMAENRHLQYERFIVAYGENMKQLADSSMDVVVCTLVLCSVQSPRKVLQEVQRVLRPGGLLFFWEHVAEPQGSRAFLWQRVLEPTWKHIGDGCHLTRETWKDIERAQFSEVQLEWQPPPFRWLPVGPHIMGKAVK</sequence>